<name>MAD55_ORYSJ</name>
<feature type="chain" id="PRO_0000229917" description="MADS-box transcription factor 55">
    <location>
        <begin position="1"/>
        <end position="245"/>
    </location>
</feature>
<feature type="domain" description="MADS-box" evidence="1">
    <location>
        <begin position="1"/>
        <end position="61"/>
    </location>
</feature>
<feature type="domain" description="K-box" evidence="2">
    <location>
        <begin position="109"/>
        <end position="199"/>
    </location>
</feature>
<feature type="region of interest" description="Disordered" evidence="3">
    <location>
        <begin position="197"/>
        <end position="245"/>
    </location>
</feature>
<feature type="compositionally biased region" description="Polar residues" evidence="3">
    <location>
        <begin position="213"/>
        <end position="224"/>
    </location>
</feature>
<feature type="splice variant" id="VSP_017789" description="In isoform 2." evidence="7">
    <location>
        <begin position="89"/>
        <end position="110"/>
    </location>
</feature>
<evidence type="ECO:0000255" key="1">
    <source>
        <dbReference type="PROSITE-ProRule" id="PRU00251"/>
    </source>
</evidence>
<evidence type="ECO:0000255" key="2">
    <source>
        <dbReference type="PROSITE-ProRule" id="PRU00629"/>
    </source>
</evidence>
<evidence type="ECO:0000256" key="3">
    <source>
        <dbReference type="SAM" id="MobiDB-lite"/>
    </source>
</evidence>
<evidence type="ECO:0000269" key="4">
    <source>
    </source>
</evidence>
<evidence type="ECO:0000269" key="5">
    <source>
    </source>
</evidence>
<evidence type="ECO:0000269" key="6">
    <source>
    </source>
</evidence>
<evidence type="ECO:0000303" key="7">
    <source>
    </source>
</evidence>
<evidence type="ECO:0000305" key="8"/>
<sequence length="245" mass="27543">MARERREIRRIESAAARQVTFSKRRRGLFKKAEELAVLCDADVALVVFSSTGKLSQFASSNMNEIIDKYTTHSKNLGKTDKQPSIDLNFFLIILLRTYTNSYAYIHLLLQLEHSKCSSLNEQLAEASLQLRQMRGEELEGLSVEELQQMEKNLEAGLQRVLCTKDQQFMQEISELQRKGIQLAEENMRLRDQMPQVPTAGLAVPDTENVLTEDGQSSESVMTALNSGSSQDNDDGSDISLKLGLP</sequence>
<organism>
    <name type="scientific">Oryza sativa subsp. japonica</name>
    <name type="common">Rice</name>
    <dbReference type="NCBI Taxonomy" id="39947"/>
    <lineage>
        <taxon>Eukaryota</taxon>
        <taxon>Viridiplantae</taxon>
        <taxon>Streptophyta</taxon>
        <taxon>Embryophyta</taxon>
        <taxon>Tracheophyta</taxon>
        <taxon>Spermatophyta</taxon>
        <taxon>Magnoliopsida</taxon>
        <taxon>Liliopsida</taxon>
        <taxon>Poales</taxon>
        <taxon>Poaceae</taxon>
        <taxon>BOP clade</taxon>
        <taxon>Oryzoideae</taxon>
        <taxon>Oryzeae</taxon>
        <taxon>Oryzinae</taxon>
        <taxon>Oryza</taxon>
        <taxon>Oryza sativa</taxon>
    </lineage>
</organism>
<gene>
    <name type="primary">MADS55</name>
    <name type="ordered locus">Os06g0217300</name>
    <name type="ordered locus">LOC_Os06g11330</name>
    <name type="ORF">OSJNBb0024N18.23</name>
</gene>
<accession>Q69TG5</accession>
<accession>Q0DDL0</accession>
<accession>Q6VAM1</accession>
<protein>
    <recommendedName>
        <fullName>MADS-box transcription factor 55</fullName>
    </recommendedName>
    <alternativeName>
        <fullName>OsMADS55</fullName>
    </alternativeName>
</protein>
<proteinExistence type="evidence at transcript level"/>
<dbReference type="EMBL" id="AY345223">
    <property type="protein sequence ID" value="AAQ23144.2"/>
    <property type="molecule type" value="mRNA"/>
</dbReference>
<dbReference type="EMBL" id="AP004741">
    <property type="protein sequence ID" value="BAD35842.1"/>
    <property type="molecule type" value="Genomic_DNA"/>
</dbReference>
<dbReference type="EMBL" id="AP008212">
    <property type="protein sequence ID" value="BAF19063.1"/>
    <property type="molecule type" value="Genomic_DNA"/>
</dbReference>
<dbReference type="EMBL" id="AP014962">
    <property type="protein sequence ID" value="BAS96796.1"/>
    <property type="molecule type" value="Genomic_DNA"/>
</dbReference>
<dbReference type="EMBL" id="AK111859">
    <property type="protein sequence ID" value="BAG99448.1"/>
    <property type="molecule type" value="mRNA"/>
</dbReference>
<dbReference type="RefSeq" id="XP_015641679.1">
    <property type="nucleotide sequence ID" value="XM_015786193.1"/>
</dbReference>
<dbReference type="SMR" id="Q69TG5"/>
<dbReference type="FunCoup" id="Q69TG5">
    <property type="interactions" value="73"/>
</dbReference>
<dbReference type="STRING" id="39947.Q69TG5"/>
<dbReference type="PaxDb" id="39947-Q69TG5"/>
<dbReference type="KEGG" id="dosa:Os06g0217300"/>
<dbReference type="eggNOG" id="KOG0014">
    <property type="taxonomic scope" value="Eukaryota"/>
</dbReference>
<dbReference type="HOGENOM" id="CLU_053053_14_1_1"/>
<dbReference type="InParanoid" id="Q69TG5"/>
<dbReference type="OMA" id="EDTNYAN"/>
<dbReference type="OrthoDB" id="1898716at2759"/>
<dbReference type="Proteomes" id="UP000000763">
    <property type="component" value="Chromosome 6"/>
</dbReference>
<dbReference type="Proteomes" id="UP000059680">
    <property type="component" value="Chromosome 6"/>
</dbReference>
<dbReference type="GO" id="GO:0005634">
    <property type="term" value="C:nucleus"/>
    <property type="evidence" value="ECO:0007669"/>
    <property type="project" value="UniProtKB-SubCell"/>
</dbReference>
<dbReference type="GO" id="GO:0000981">
    <property type="term" value="F:DNA-binding transcription factor activity, RNA polymerase II-specific"/>
    <property type="evidence" value="ECO:0000318"/>
    <property type="project" value="GO_Central"/>
</dbReference>
<dbReference type="GO" id="GO:0046983">
    <property type="term" value="F:protein dimerization activity"/>
    <property type="evidence" value="ECO:0007669"/>
    <property type="project" value="InterPro"/>
</dbReference>
<dbReference type="GO" id="GO:0000978">
    <property type="term" value="F:RNA polymerase II cis-regulatory region sequence-specific DNA binding"/>
    <property type="evidence" value="ECO:0000318"/>
    <property type="project" value="GO_Central"/>
</dbReference>
<dbReference type="GO" id="GO:1900458">
    <property type="term" value="P:negative regulation of brassinosteroid mediated signaling pathway"/>
    <property type="evidence" value="ECO:0000315"/>
    <property type="project" value="UniProtKB"/>
</dbReference>
<dbReference type="GO" id="GO:0045944">
    <property type="term" value="P:positive regulation of transcription by RNA polymerase II"/>
    <property type="evidence" value="ECO:0007669"/>
    <property type="project" value="InterPro"/>
</dbReference>
<dbReference type="GO" id="GO:0006357">
    <property type="term" value="P:regulation of transcription by RNA polymerase II"/>
    <property type="evidence" value="ECO:0000318"/>
    <property type="project" value="GO_Central"/>
</dbReference>
<dbReference type="CDD" id="cd00265">
    <property type="entry name" value="MADS_MEF2_like"/>
    <property type="match status" value="1"/>
</dbReference>
<dbReference type="FunFam" id="3.40.1810.10:FF:000007">
    <property type="entry name" value="Transcription factor, MADS-box"/>
    <property type="match status" value="1"/>
</dbReference>
<dbReference type="Gene3D" id="3.40.1810.10">
    <property type="entry name" value="Transcription factor, MADS-box"/>
    <property type="match status" value="1"/>
</dbReference>
<dbReference type="InterPro" id="IPR050142">
    <property type="entry name" value="MADS-box/MEF2_TF"/>
</dbReference>
<dbReference type="InterPro" id="IPR033896">
    <property type="entry name" value="MEF2-like_N"/>
</dbReference>
<dbReference type="InterPro" id="IPR002487">
    <property type="entry name" value="TF_Kbox"/>
</dbReference>
<dbReference type="InterPro" id="IPR002100">
    <property type="entry name" value="TF_MADSbox"/>
</dbReference>
<dbReference type="InterPro" id="IPR036879">
    <property type="entry name" value="TF_MADSbox_sf"/>
</dbReference>
<dbReference type="PANTHER" id="PTHR48019">
    <property type="entry name" value="SERUM RESPONSE FACTOR HOMOLOG"/>
    <property type="match status" value="1"/>
</dbReference>
<dbReference type="Pfam" id="PF01486">
    <property type="entry name" value="K-box"/>
    <property type="match status" value="1"/>
</dbReference>
<dbReference type="Pfam" id="PF00319">
    <property type="entry name" value="SRF-TF"/>
    <property type="match status" value="1"/>
</dbReference>
<dbReference type="PRINTS" id="PR00404">
    <property type="entry name" value="MADSDOMAIN"/>
</dbReference>
<dbReference type="SMART" id="SM00432">
    <property type="entry name" value="MADS"/>
    <property type="match status" value="1"/>
</dbReference>
<dbReference type="SUPFAM" id="SSF55455">
    <property type="entry name" value="SRF-like"/>
    <property type="match status" value="1"/>
</dbReference>
<dbReference type="PROSITE" id="PS51297">
    <property type="entry name" value="K_BOX"/>
    <property type="match status" value="1"/>
</dbReference>
<dbReference type="PROSITE" id="PS00350">
    <property type="entry name" value="MADS_BOX_1"/>
    <property type="match status" value="1"/>
</dbReference>
<dbReference type="PROSITE" id="PS50066">
    <property type="entry name" value="MADS_BOX_2"/>
    <property type="match status" value="1"/>
</dbReference>
<reference key="1">
    <citation type="journal article" date="2003" name="Plant Cell Physiol.">
        <title>Systematic reverse genetic screening of T-DNA tagged genes in rice for functional genomic analyses: MADS-box genes as a test case.</title>
        <authorList>
            <person name="Lee S."/>
            <person name="Kim J."/>
            <person name="Son J.-S."/>
            <person name="Nam J."/>
            <person name="Jeong D.-H."/>
            <person name="Lee K."/>
            <person name="Jang S."/>
            <person name="Yoo J."/>
            <person name="Lee J."/>
            <person name="Lee D.-Y."/>
            <person name="Kang H.-G."/>
            <person name="An G."/>
        </authorList>
    </citation>
    <scope>NUCLEOTIDE SEQUENCE [MRNA] (ISOFORM 1)</scope>
    <scope>TISSUE SPECIFICITY</scope>
    <source>
        <strain>cv. Dongjin</strain>
    </source>
</reference>
<reference key="2">
    <citation type="journal article" date="2005" name="Nature">
        <title>The map-based sequence of the rice genome.</title>
        <authorList>
            <consortium name="International rice genome sequencing project (IRGSP)"/>
        </authorList>
    </citation>
    <scope>NUCLEOTIDE SEQUENCE [LARGE SCALE GENOMIC DNA]</scope>
    <source>
        <strain>cv. Nipponbare</strain>
    </source>
</reference>
<reference key="3">
    <citation type="journal article" date="2008" name="Nucleic Acids Res.">
        <title>The rice annotation project database (RAP-DB): 2008 update.</title>
        <authorList>
            <consortium name="The rice annotation project (RAP)"/>
        </authorList>
    </citation>
    <scope>GENOME REANNOTATION</scope>
    <source>
        <strain>cv. Nipponbare</strain>
    </source>
</reference>
<reference key="4">
    <citation type="journal article" date="2013" name="Rice">
        <title>Improvement of the Oryza sativa Nipponbare reference genome using next generation sequence and optical map data.</title>
        <authorList>
            <person name="Kawahara Y."/>
            <person name="de la Bastide M."/>
            <person name="Hamilton J.P."/>
            <person name="Kanamori H."/>
            <person name="McCombie W.R."/>
            <person name="Ouyang S."/>
            <person name="Schwartz D.C."/>
            <person name="Tanaka T."/>
            <person name="Wu J."/>
            <person name="Zhou S."/>
            <person name="Childs K.L."/>
            <person name="Davidson R.M."/>
            <person name="Lin H."/>
            <person name="Quesada-Ocampo L."/>
            <person name="Vaillancourt B."/>
            <person name="Sakai H."/>
            <person name="Lee S.S."/>
            <person name="Kim J."/>
            <person name="Numa H."/>
            <person name="Itoh T."/>
            <person name="Buell C.R."/>
            <person name="Matsumoto T."/>
        </authorList>
    </citation>
    <scope>GENOME REANNOTATION</scope>
    <source>
        <strain>cv. Nipponbare</strain>
    </source>
</reference>
<reference key="5">
    <citation type="journal article" date="2003" name="Science">
        <title>Collection, mapping, and annotation of over 28,000 cDNA clones from japonica rice.</title>
        <authorList>
            <consortium name="The rice full-length cDNA consortium"/>
        </authorList>
    </citation>
    <scope>NUCLEOTIDE SEQUENCE [LARGE SCALE MRNA] (ISOFORM 2)</scope>
    <source>
        <strain>cv. Nipponbare</strain>
    </source>
</reference>
<reference key="6">
    <citation type="journal article" date="2005" name="Mol. Genet. Genomics">
        <title>OsMADS22, an STMADS11-like MADS-box gene of rice, is expressed in non-vegetative tissues and its ectopic expression induces spikelet meristem indeterminacy.</title>
        <authorList>
            <person name="Sentoku N."/>
            <person name="Kato H."/>
            <person name="Kitano H."/>
            <person name="Imai R."/>
        </authorList>
    </citation>
    <scope>TISSUE SPECIFICITY</scope>
</reference>
<reference key="7">
    <citation type="journal article" date="2008" name="Plant J.">
        <title>Rice SVP-group MADS-box proteins, OsMADS22 and OsMADS55, are negative regulators of brassinosteroid responses.</title>
        <authorList>
            <person name="Lee S."/>
            <person name="Choi S.C."/>
            <person name="An G."/>
        </authorList>
    </citation>
    <scope>FUNCTION</scope>
    <scope>TISSUE SPECIFICITY</scope>
</reference>
<comment type="function">
    <text evidence="6">Transcription factor that acts as a negative regulator of brassinosteroid signaling.</text>
</comment>
<comment type="subcellular location">
    <subcellularLocation>
        <location evidence="8">Nucleus</location>
    </subcellularLocation>
</comment>
<comment type="alternative products">
    <event type="alternative splicing"/>
    <isoform>
        <id>Q69TG5-1</id>
        <name>1</name>
        <sequence type="displayed"/>
    </isoform>
    <isoform>
        <id>Q69TG5-2</id>
        <name>2</name>
        <sequence type="described" ref="VSP_017789"/>
    </isoform>
</comment>
<comment type="tissue specificity">
    <text evidence="4 5 6">Expressed in roots, shoots and developing panicles (PubMed:14701936, PubMed:15682279). Expressed in shoots (PubMed:18182025).</text>
</comment>
<comment type="miscellaneous">
    <text evidence="6">Plants silencing MADS55 exhibit a reduction in the number of elongated internodes and an increase in lamina joint inclination (PubMed:18182025). Plants over-expressing MADS55 exhibit low fertility, abnormal florets, shortened panicles and elongated stems (PubMed:18182025).</text>
</comment>
<keyword id="KW-0025">Alternative splicing</keyword>
<keyword id="KW-0238">DNA-binding</keyword>
<keyword id="KW-0539">Nucleus</keyword>
<keyword id="KW-1185">Reference proteome</keyword>
<keyword id="KW-0804">Transcription</keyword>
<keyword id="KW-0805">Transcription regulation</keyword>